<reference key="1">
    <citation type="journal article" date="2005" name="Gene">
        <title>The first complete chloroplast genome sequence of a lycophyte, Huperzia lucidula (Lycopodiaceae).</title>
        <authorList>
            <person name="Wolf P.G."/>
            <person name="Karol K.G."/>
            <person name="Mandoli D.F."/>
            <person name="Kuehl J.V."/>
            <person name="Arumuganathan K."/>
            <person name="Ellis M.W."/>
            <person name="Mishler B.D."/>
            <person name="Kelch D.G."/>
            <person name="Olmstead R.G."/>
            <person name="Boore J.L."/>
        </authorList>
    </citation>
    <scope>NUCLEOTIDE SEQUENCE [LARGE SCALE GENOMIC DNA]</scope>
</reference>
<organism>
    <name type="scientific">Huperzia lucidula</name>
    <name type="common">Shining clubmoss</name>
    <name type="synonym">Lycopodium lucidulum</name>
    <dbReference type="NCBI Taxonomy" id="37429"/>
    <lineage>
        <taxon>Eukaryota</taxon>
        <taxon>Viridiplantae</taxon>
        <taxon>Streptophyta</taxon>
        <taxon>Embryophyta</taxon>
        <taxon>Tracheophyta</taxon>
        <taxon>Lycopodiopsida</taxon>
        <taxon>Lycopodiales</taxon>
        <taxon>Lycopodiaceae</taxon>
        <taxon>Huperzioideae</taxon>
        <taxon>Huperzia</taxon>
    </lineage>
</organism>
<feature type="chain" id="PRO_0000276614" description="Small ribosomal subunit protein uS12c">
    <location>
        <begin position="1"/>
        <end position="123"/>
    </location>
</feature>
<evidence type="ECO:0000250" key="1"/>
<evidence type="ECO:0000305" key="2"/>
<proteinExistence type="inferred from homology"/>
<name>RR12_HUPLU</name>
<sequence length="123" mass="13738">MPTIQQLIRNQRQPVENRTKSPALQGCPQRRGVCTRVYTTTPKKPNSALRKVARVRLTSGFEITAYIPGIGHNSQEHSVVLVRGGRVKDLPGVRYHIVRGTLDAVGVKNRQQGRSKYGVKKPK</sequence>
<dbReference type="EMBL" id="AY660566">
    <property type="protein sequence ID" value="AAT80701.2"/>
    <property type="molecule type" value="Genomic_DNA"/>
</dbReference>
<dbReference type="RefSeq" id="YP_209505.1">
    <property type="nucleotide sequence ID" value="NC_006861.1"/>
</dbReference>
<dbReference type="SMR" id="Q5SD27"/>
<dbReference type="GeneID" id="3283832"/>
<dbReference type="GO" id="GO:0009507">
    <property type="term" value="C:chloroplast"/>
    <property type="evidence" value="ECO:0007669"/>
    <property type="project" value="UniProtKB-SubCell"/>
</dbReference>
<dbReference type="GO" id="GO:0015935">
    <property type="term" value="C:small ribosomal subunit"/>
    <property type="evidence" value="ECO:0007669"/>
    <property type="project" value="InterPro"/>
</dbReference>
<dbReference type="GO" id="GO:0019843">
    <property type="term" value="F:rRNA binding"/>
    <property type="evidence" value="ECO:0007669"/>
    <property type="project" value="UniProtKB-UniRule"/>
</dbReference>
<dbReference type="GO" id="GO:0003735">
    <property type="term" value="F:structural constituent of ribosome"/>
    <property type="evidence" value="ECO:0007669"/>
    <property type="project" value="InterPro"/>
</dbReference>
<dbReference type="GO" id="GO:0006412">
    <property type="term" value="P:translation"/>
    <property type="evidence" value="ECO:0007669"/>
    <property type="project" value="UniProtKB-UniRule"/>
</dbReference>
<dbReference type="CDD" id="cd03368">
    <property type="entry name" value="Ribosomal_S12"/>
    <property type="match status" value="1"/>
</dbReference>
<dbReference type="FunFam" id="2.40.50.140:FF:000008">
    <property type="entry name" value="30S ribosomal protein S12, chloroplastic"/>
    <property type="match status" value="1"/>
</dbReference>
<dbReference type="Gene3D" id="2.40.50.140">
    <property type="entry name" value="Nucleic acid-binding proteins"/>
    <property type="match status" value="1"/>
</dbReference>
<dbReference type="HAMAP" id="MF_00403_B">
    <property type="entry name" value="Ribosomal_uS12_B"/>
    <property type="match status" value="1"/>
</dbReference>
<dbReference type="InterPro" id="IPR012340">
    <property type="entry name" value="NA-bd_OB-fold"/>
</dbReference>
<dbReference type="InterPro" id="IPR006032">
    <property type="entry name" value="Ribosomal_uS12"/>
</dbReference>
<dbReference type="InterPro" id="IPR005679">
    <property type="entry name" value="Ribosomal_uS12_bac"/>
</dbReference>
<dbReference type="NCBIfam" id="TIGR00981">
    <property type="entry name" value="rpsL_bact"/>
    <property type="match status" value="1"/>
</dbReference>
<dbReference type="PANTHER" id="PTHR11652">
    <property type="entry name" value="30S RIBOSOMAL PROTEIN S12 FAMILY MEMBER"/>
    <property type="match status" value="1"/>
</dbReference>
<dbReference type="Pfam" id="PF00164">
    <property type="entry name" value="Ribosom_S12_S23"/>
    <property type="match status" value="1"/>
</dbReference>
<dbReference type="PIRSF" id="PIRSF002133">
    <property type="entry name" value="Ribosomal_S12/S23"/>
    <property type="match status" value="1"/>
</dbReference>
<dbReference type="PRINTS" id="PR01034">
    <property type="entry name" value="RIBOSOMALS12"/>
</dbReference>
<dbReference type="SUPFAM" id="SSF50249">
    <property type="entry name" value="Nucleic acid-binding proteins"/>
    <property type="match status" value="1"/>
</dbReference>
<dbReference type="PROSITE" id="PS00055">
    <property type="entry name" value="RIBOSOMAL_S12"/>
    <property type="match status" value="1"/>
</dbReference>
<protein>
    <recommendedName>
        <fullName evidence="2">Small ribosomal subunit protein uS12c</fullName>
    </recommendedName>
    <alternativeName>
        <fullName>30S ribosomal protein S12, chloroplastic</fullName>
    </alternativeName>
</protein>
<gene>
    <name type="primary">rps12</name>
</gene>
<comment type="function">
    <text evidence="1">With S4 and S5 plays an important role in translational accuracy. Located at the interface of the 30S and 50S subunits (By similarity).</text>
</comment>
<comment type="subunit">
    <text evidence="1">Part of the 30S ribosomal subunit.</text>
</comment>
<comment type="subcellular location">
    <subcellularLocation>
        <location>Plastid</location>
        <location>Chloroplast</location>
    </subcellularLocation>
</comment>
<comment type="similarity">
    <text evidence="2">Belongs to the universal ribosomal protein uS12 family.</text>
</comment>
<keyword id="KW-0150">Chloroplast</keyword>
<keyword id="KW-0934">Plastid</keyword>
<keyword id="KW-0687">Ribonucleoprotein</keyword>
<keyword id="KW-0689">Ribosomal protein</keyword>
<keyword id="KW-0694">RNA-binding</keyword>
<keyword id="KW-0699">rRNA-binding</keyword>
<accession>Q5SD27</accession>
<geneLocation type="chloroplast"/>